<protein>
    <recommendedName>
        <fullName evidence="2">Small ribosomal subunit protein uS12</fullName>
    </recommendedName>
    <alternativeName>
        <fullName evidence="3">30S ribosomal protein S12</fullName>
    </alternativeName>
</protein>
<dbReference type="EMBL" id="CP000538">
    <property type="protein sequence ID" value="EAQ73201.1"/>
    <property type="molecule type" value="Genomic_DNA"/>
</dbReference>
<dbReference type="RefSeq" id="WP_002782934.1">
    <property type="nucleotide sequence ID" value="NC_008787.1"/>
</dbReference>
<dbReference type="SMR" id="A1VYJ6"/>
<dbReference type="GeneID" id="98395216"/>
<dbReference type="KEGG" id="cjj:CJJ81176_0511"/>
<dbReference type="eggNOG" id="COG0048">
    <property type="taxonomic scope" value="Bacteria"/>
</dbReference>
<dbReference type="HOGENOM" id="CLU_104295_1_2_7"/>
<dbReference type="Proteomes" id="UP000000646">
    <property type="component" value="Chromosome"/>
</dbReference>
<dbReference type="GO" id="GO:0015935">
    <property type="term" value="C:small ribosomal subunit"/>
    <property type="evidence" value="ECO:0007669"/>
    <property type="project" value="InterPro"/>
</dbReference>
<dbReference type="GO" id="GO:0019843">
    <property type="term" value="F:rRNA binding"/>
    <property type="evidence" value="ECO:0007669"/>
    <property type="project" value="UniProtKB-UniRule"/>
</dbReference>
<dbReference type="GO" id="GO:0003735">
    <property type="term" value="F:structural constituent of ribosome"/>
    <property type="evidence" value="ECO:0007669"/>
    <property type="project" value="InterPro"/>
</dbReference>
<dbReference type="GO" id="GO:0000049">
    <property type="term" value="F:tRNA binding"/>
    <property type="evidence" value="ECO:0007669"/>
    <property type="project" value="UniProtKB-UniRule"/>
</dbReference>
<dbReference type="GO" id="GO:0006412">
    <property type="term" value="P:translation"/>
    <property type="evidence" value="ECO:0007669"/>
    <property type="project" value="UniProtKB-UniRule"/>
</dbReference>
<dbReference type="CDD" id="cd03368">
    <property type="entry name" value="Ribosomal_S12"/>
    <property type="match status" value="1"/>
</dbReference>
<dbReference type="FunFam" id="2.40.50.140:FF:000001">
    <property type="entry name" value="30S ribosomal protein S12"/>
    <property type="match status" value="1"/>
</dbReference>
<dbReference type="Gene3D" id="2.40.50.140">
    <property type="entry name" value="Nucleic acid-binding proteins"/>
    <property type="match status" value="1"/>
</dbReference>
<dbReference type="HAMAP" id="MF_00403_B">
    <property type="entry name" value="Ribosomal_uS12_B"/>
    <property type="match status" value="1"/>
</dbReference>
<dbReference type="InterPro" id="IPR012340">
    <property type="entry name" value="NA-bd_OB-fold"/>
</dbReference>
<dbReference type="InterPro" id="IPR006032">
    <property type="entry name" value="Ribosomal_uS12"/>
</dbReference>
<dbReference type="InterPro" id="IPR005679">
    <property type="entry name" value="Ribosomal_uS12_bac"/>
</dbReference>
<dbReference type="NCBIfam" id="TIGR00981">
    <property type="entry name" value="rpsL_bact"/>
    <property type="match status" value="1"/>
</dbReference>
<dbReference type="PANTHER" id="PTHR11652">
    <property type="entry name" value="30S RIBOSOMAL PROTEIN S12 FAMILY MEMBER"/>
    <property type="match status" value="1"/>
</dbReference>
<dbReference type="Pfam" id="PF00164">
    <property type="entry name" value="Ribosom_S12_S23"/>
    <property type="match status" value="1"/>
</dbReference>
<dbReference type="PIRSF" id="PIRSF002133">
    <property type="entry name" value="Ribosomal_S12/S23"/>
    <property type="match status" value="1"/>
</dbReference>
<dbReference type="PRINTS" id="PR01034">
    <property type="entry name" value="RIBOSOMALS12"/>
</dbReference>
<dbReference type="SUPFAM" id="SSF50249">
    <property type="entry name" value="Nucleic acid-binding proteins"/>
    <property type="match status" value="1"/>
</dbReference>
<dbReference type="PROSITE" id="PS00055">
    <property type="entry name" value="RIBOSOMAL_S12"/>
    <property type="match status" value="1"/>
</dbReference>
<name>RS12_CAMJJ</name>
<reference key="1">
    <citation type="submission" date="2006-12" db="EMBL/GenBank/DDBJ databases">
        <authorList>
            <person name="Fouts D.E."/>
            <person name="Nelson K.E."/>
            <person name="Sebastian Y."/>
        </authorList>
    </citation>
    <scope>NUCLEOTIDE SEQUENCE [LARGE SCALE GENOMIC DNA]</scope>
    <source>
        <strain>81-176</strain>
    </source>
</reference>
<proteinExistence type="inferred from homology"/>
<feature type="chain" id="PRO_0000295964" description="Small ribosomal subunit protein uS12">
    <location>
        <begin position="1"/>
        <end position="128"/>
    </location>
</feature>
<feature type="modified residue" description="3-methylthioaspartic acid" evidence="1">
    <location>
        <position position="89"/>
    </location>
</feature>
<evidence type="ECO:0000250" key="1"/>
<evidence type="ECO:0000255" key="2">
    <source>
        <dbReference type="HAMAP-Rule" id="MF_00403"/>
    </source>
</evidence>
<evidence type="ECO:0000305" key="3"/>
<gene>
    <name evidence="2" type="primary">rpsL</name>
    <name type="ordered locus">CJJ81176_0511</name>
</gene>
<comment type="function">
    <text evidence="2">With S4 and S5 plays an important role in translational accuracy.</text>
</comment>
<comment type="function">
    <text evidence="2">Interacts with and stabilizes bases of the 16S rRNA that are involved in tRNA selection in the A site and with the mRNA backbone. Located at the interface of the 30S and 50S subunits, it traverses the body of the 30S subunit contacting proteins on the other side and probably holding the rRNA structure together. The combined cluster of proteins S8, S12 and S17 appears to hold together the shoulder and platform of the 30S subunit.</text>
</comment>
<comment type="subunit">
    <text evidence="2">Part of the 30S ribosomal subunit. Contacts proteins S8 and S17. May interact with IF1 in the 30S initiation complex.</text>
</comment>
<comment type="similarity">
    <text evidence="2">Belongs to the universal ribosomal protein uS12 family.</text>
</comment>
<accession>A1VYJ6</accession>
<organism>
    <name type="scientific">Campylobacter jejuni subsp. jejuni serotype O:23/36 (strain 81-176)</name>
    <dbReference type="NCBI Taxonomy" id="354242"/>
    <lineage>
        <taxon>Bacteria</taxon>
        <taxon>Pseudomonadati</taxon>
        <taxon>Campylobacterota</taxon>
        <taxon>Epsilonproteobacteria</taxon>
        <taxon>Campylobacterales</taxon>
        <taxon>Campylobacteraceae</taxon>
        <taxon>Campylobacter</taxon>
    </lineage>
</organism>
<sequence>MPTINQLVRKERKKVLEKSKSPALKNCPQRRGVCTRVYTTTPKKPNSALRKVAKVRLTSGFEVISYIGGEGHNLQEHSIVLVRGGRVKDLPGVKYHIVRGALDTAGVAKRTVSRSKYGAKRPKAGAAK</sequence>
<keyword id="KW-0488">Methylation</keyword>
<keyword id="KW-0687">Ribonucleoprotein</keyword>
<keyword id="KW-0689">Ribosomal protein</keyword>
<keyword id="KW-0694">RNA-binding</keyword>
<keyword id="KW-0699">rRNA-binding</keyword>
<keyword id="KW-0820">tRNA-binding</keyword>